<organismHost>
    <name type="scientific">Aves</name>
    <dbReference type="NCBI Taxonomy" id="8782"/>
</organismHost>
<organismHost>
    <name type="scientific">Equus caballus</name>
    <name type="common">Horse</name>
    <dbReference type="NCBI Taxonomy" id="9796"/>
</organismHost>
<organismHost>
    <name type="scientific">Homo sapiens</name>
    <name type="common">Human</name>
    <dbReference type="NCBI Taxonomy" id="9606"/>
</organismHost>
<organismHost>
    <name type="scientific">Phocidae</name>
    <name type="common">true seals</name>
    <dbReference type="NCBI Taxonomy" id="9709"/>
</organismHost>
<protein>
    <recommendedName>
        <fullName evidence="1">Nucleoprotein</fullName>
    </recommendedName>
    <alternativeName>
        <fullName evidence="1">Nucleocapsid protein</fullName>
        <shortName evidence="1">Protein N</shortName>
    </alternativeName>
</protein>
<gene>
    <name evidence="1" type="primary">NP</name>
</gene>
<reference key="1">
    <citation type="journal article" date="1990" name="J. Virol.">
        <title>Evolution of the nucleoprotein gene of influenza A virus.</title>
        <authorList>
            <person name="Gorman O.T."/>
            <person name="Bean W.J."/>
            <person name="Kawaoka Y."/>
            <person name="Webster R.G."/>
        </authorList>
    </citation>
    <scope>NUCLEOTIDE SEQUENCE [GENOMIC RNA]</scope>
</reference>
<keyword id="KW-0167">Capsid protein</keyword>
<keyword id="KW-1139">Helical capsid protein</keyword>
<keyword id="KW-1048">Host nucleus</keyword>
<keyword id="KW-0945">Host-virus interaction</keyword>
<keyword id="KW-0687">Ribonucleoprotein</keyword>
<keyword id="KW-0694">RNA-binding</keyword>
<keyword id="KW-0543">Viral nucleoprotein</keyword>
<keyword id="KW-1163">Viral penetration into host nucleus</keyword>
<keyword id="KW-0946">Virion</keyword>
<keyword id="KW-1160">Virus entry into host cell</keyword>
<comment type="function">
    <text evidence="1">Encapsidates the negative strand viral RNA, protecting it from nucleases. The encapsidated genomic RNA is termed the ribonucleoprotein (RNP) and serves as template for transcription and replication. The RNP needs to be localized in the host nucleus to start an infectious cycle, but is too large to diffuse through the nuclear pore complex. NP comprises at least 2 nuclear localization signals that are responsible for the active RNP import into the nucleus through cellular importin alpha/beta pathway. Later in the infection, nclear export of RNPs are mediated through viral proteins NEP interacting with M1 which binds nucleoproteins. It is possible that nucleoprotein binds directly host exportin-1/XPO1 and plays an active role in RNPs nuclear export. M1 interaction with RNP seems to hide nucleoprotein's nuclear localization signals. Soon after a virion infects a new cell, M1 dissociates from the RNP under acidification of the virion driven by M2 protein. Dissociation of M1 from RNP unmasks nucleoprotein's nuclear localization signals, targeting the RNP to the nucleus.</text>
</comment>
<comment type="subunit">
    <text evidence="1">Homomultimerizes to form the nucleocapsid. May bind host exportin-1/XPO1. Binds to viral genomic RNA. Protein-RNA contacts are mediated by a combination of electrostatic interactions between positively charged residues and the phosphate backbone and planar interactions between aromatic side chains and bases.</text>
</comment>
<comment type="subcellular location">
    <subcellularLocation>
        <location evidence="1">Virion</location>
    </subcellularLocation>
    <subcellularLocation>
        <location evidence="1">Host nucleus</location>
    </subcellularLocation>
</comment>
<comment type="PTM">
    <text evidence="1">Late in virus-infected cells, may be cleaved from a 56-kDa protein to a 53-kDa protein by a cellular caspase. This cleavage might be a marker for the onset of apoptosis in infected cells or have a specific function in virus host interaction.</text>
</comment>
<comment type="similarity">
    <text evidence="1">Belongs to the influenza viruses nucleoprotein family.</text>
</comment>
<proteinExistence type="inferred from homology"/>
<feature type="chain" id="PRO_0000079062" description="Nucleoprotein">
    <location>
        <begin position="1"/>
        <end position="498"/>
    </location>
</feature>
<feature type="region of interest" description="Disordered" evidence="2">
    <location>
        <begin position="1"/>
        <end position="21"/>
    </location>
</feature>
<feature type="short sequence motif" description="Unconventional nuclear localization signal" evidence="1">
    <location>
        <begin position="1"/>
        <end position="18"/>
    </location>
</feature>
<feature type="short sequence motif" description="Bipartite nuclear localization signal" evidence="1">
    <location>
        <begin position="198"/>
        <end position="216"/>
    </location>
</feature>
<evidence type="ECO:0000255" key="1">
    <source>
        <dbReference type="HAMAP-Rule" id="MF_04070"/>
    </source>
</evidence>
<evidence type="ECO:0000256" key="2">
    <source>
        <dbReference type="SAM" id="MobiDB-lite"/>
    </source>
</evidence>
<name>NCAP_I73A4</name>
<dbReference type="EMBL" id="M30750">
    <property type="protein sequence ID" value="AAA43457.1"/>
    <property type="molecule type" value="Genomic_RNA"/>
</dbReference>
<dbReference type="SMR" id="P15673"/>
<dbReference type="GO" id="GO:0019029">
    <property type="term" value="C:helical viral capsid"/>
    <property type="evidence" value="ECO:0007669"/>
    <property type="project" value="UniProtKB-UniRule"/>
</dbReference>
<dbReference type="GO" id="GO:0043657">
    <property type="term" value="C:host cell"/>
    <property type="evidence" value="ECO:0007669"/>
    <property type="project" value="GOC"/>
</dbReference>
<dbReference type="GO" id="GO:0042025">
    <property type="term" value="C:host cell nucleus"/>
    <property type="evidence" value="ECO:0007669"/>
    <property type="project" value="UniProtKB-SubCell"/>
</dbReference>
<dbReference type="GO" id="GO:1990904">
    <property type="term" value="C:ribonucleoprotein complex"/>
    <property type="evidence" value="ECO:0007669"/>
    <property type="project" value="UniProtKB-KW"/>
</dbReference>
<dbReference type="GO" id="GO:0019013">
    <property type="term" value="C:viral nucleocapsid"/>
    <property type="evidence" value="ECO:0007669"/>
    <property type="project" value="UniProtKB-UniRule"/>
</dbReference>
<dbReference type="GO" id="GO:0003723">
    <property type="term" value="F:RNA binding"/>
    <property type="evidence" value="ECO:0007669"/>
    <property type="project" value="UniProtKB-UniRule"/>
</dbReference>
<dbReference type="GO" id="GO:0005198">
    <property type="term" value="F:structural molecule activity"/>
    <property type="evidence" value="ECO:0007669"/>
    <property type="project" value="UniProtKB-UniRule"/>
</dbReference>
<dbReference type="GO" id="GO:0046718">
    <property type="term" value="P:symbiont entry into host cell"/>
    <property type="evidence" value="ECO:0007669"/>
    <property type="project" value="UniProtKB-KW"/>
</dbReference>
<dbReference type="GO" id="GO:0075732">
    <property type="term" value="P:viral penetration into host nucleus"/>
    <property type="evidence" value="ECO:0007669"/>
    <property type="project" value="UniProtKB-UniRule"/>
</dbReference>
<dbReference type="HAMAP" id="MF_04070">
    <property type="entry name" value="INFV_NCAP"/>
    <property type="match status" value="1"/>
</dbReference>
<dbReference type="InterPro" id="IPR002141">
    <property type="entry name" value="Flu_NP"/>
</dbReference>
<dbReference type="Pfam" id="PF00506">
    <property type="entry name" value="Flu_NP"/>
    <property type="match status" value="1"/>
</dbReference>
<dbReference type="SUPFAM" id="SSF161003">
    <property type="entry name" value="flu NP-like"/>
    <property type="match status" value="1"/>
</dbReference>
<accession>P15673</accession>
<sequence>MASQGTKRSYEQMETGGERQNATEIRASVGRMVGGIGRFYVQMCTELKLNDHEGRLIQNSITIERMVLSAFDERRNKYLEEHPSAGKDPKKTGGPIYRRRDGKWMRELILHDKEEIRRIWRQANNGEDATAGLTHMMIWHSNLNDTTYQRTRALVRTGMDPRMCSLMQGSTLPRRSGAAGAAVKGVGTMVMELIRMIKRGINDRNFWRGENGRRTRIAYERMCNILKGKFQTAAQRAMMDQVREGRNPGNAEIEDLIFLARSALILRGSVAHKSCLPACVYGLAVASGYDFEKEGYSLVGIDPFKLLQNSQIFSLIRPKENPAHKSQLVWMACHSAAFEDLRVSNFIRGTKVIPRGQLATRGVQIASNENMETIDSSTLELRSRYWAIRTRSGGNTSQQRASAGQISVQPTFSVQRNLPFERATIMAAFTGNTEGRTSDMRTEIIRMMENARSEDVSFQGRGVFELSDEKATNPIVPSFDMSNEGSYFFGDNAEEFDS</sequence>
<organism>
    <name type="scientific">Influenza A virus (strain A/Equine/London/1416/1973 H7N7)</name>
    <dbReference type="NCBI Taxonomy" id="380340"/>
    <lineage>
        <taxon>Viruses</taxon>
        <taxon>Riboviria</taxon>
        <taxon>Orthornavirae</taxon>
        <taxon>Negarnaviricota</taxon>
        <taxon>Polyploviricotina</taxon>
        <taxon>Insthoviricetes</taxon>
        <taxon>Articulavirales</taxon>
        <taxon>Orthomyxoviridae</taxon>
        <taxon>Alphainfluenzavirus</taxon>
        <taxon>Alphainfluenzavirus influenzae</taxon>
        <taxon>Influenza A virus</taxon>
    </lineage>
</organism>